<dbReference type="EMBL" id="BX897699">
    <property type="protein sequence ID" value="CAF27282.1"/>
    <property type="molecule type" value="Genomic_DNA"/>
</dbReference>
<dbReference type="RefSeq" id="WP_011180405.1">
    <property type="nucleotide sequence ID" value="NZ_LRIJ02000001.1"/>
</dbReference>
<dbReference type="SMR" id="Q6G494"/>
<dbReference type="PaxDb" id="283166-BH04740"/>
<dbReference type="EnsemblBacteria" id="CAF27282">
    <property type="protein sequence ID" value="CAF27282"/>
    <property type="gene ID" value="BH04740"/>
</dbReference>
<dbReference type="GeneID" id="92985131"/>
<dbReference type="KEGG" id="bhe:BH04740"/>
<dbReference type="eggNOG" id="COG2332">
    <property type="taxonomic scope" value="Bacteria"/>
</dbReference>
<dbReference type="OrthoDB" id="9793584at2"/>
<dbReference type="Proteomes" id="UP000000421">
    <property type="component" value="Chromosome"/>
</dbReference>
<dbReference type="GO" id="GO:0005886">
    <property type="term" value="C:plasma membrane"/>
    <property type="evidence" value="ECO:0007669"/>
    <property type="project" value="UniProtKB-SubCell"/>
</dbReference>
<dbReference type="GO" id="GO:0020037">
    <property type="term" value="F:heme binding"/>
    <property type="evidence" value="ECO:0007669"/>
    <property type="project" value="InterPro"/>
</dbReference>
<dbReference type="GO" id="GO:0046872">
    <property type="term" value="F:metal ion binding"/>
    <property type="evidence" value="ECO:0007669"/>
    <property type="project" value="UniProtKB-KW"/>
</dbReference>
<dbReference type="GO" id="GO:0017004">
    <property type="term" value="P:cytochrome complex assembly"/>
    <property type="evidence" value="ECO:0007669"/>
    <property type="project" value="UniProtKB-KW"/>
</dbReference>
<dbReference type="Gene3D" id="2.40.50.140">
    <property type="entry name" value="Nucleic acid-binding proteins"/>
    <property type="match status" value="1"/>
</dbReference>
<dbReference type="HAMAP" id="MF_01959">
    <property type="entry name" value="CcmE"/>
    <property type="match status" value="1"/>
</dbReference>
<dbReference type="InterPro" id="IPR004329">
    <property type="entry name" value="CcmE"/>
</dbReference>
<dbReference type="InterPro" id="IPR036127">
    <property type="entry name" value="CcmE-like_sf"/>
</dbReference>
<dbReference type="InterPro" id="IPR012340">
    <property type="entry name" value="NA-bd_OB-fold"/>
</dbReference>
<dbReference type="NCBIfam" id="NF009727">
    <property type="entry name" value="PRK13254.1-1"/>
    <property type="match status" value="1"/>
</dbReference>
<dbReference type="NCBIfam" id="NF009731">
    <property type="entry name" value="PRK13254.1-5"/>
    <property type="match status" value="1"/>
</dbReference>
<dbReference type="PANTHER" id="PTHR34128">
    <property type="entry name" value="CYTOCHROME C-TYPE BIOGENESIS PROTEIN CCME HOMOLOG, MITOCHONDRIAL"/>
    <property type="match status" value="1"/>
</dbReference>
<dbReference type="PANTHER" id="PTHR34128:SF2">
    <property type="entry name" value="CYTOCHROME C-TYPE BIOGENESIS PROTEIN CCME HOMOLOG, MITOCHONDRIAL"/>
    <property type="match status" value="1"/>
</dbReference>
<dbReference type="Pfam" id="PF03100">
    <property type="entry name" value="CcmE"/>
    <property type="match status" value="1"/>
</dbReference>
<dbReference type="SUPFAM" id="SSF82093">
    <property type="entry name" value="Heme chaperone CcmE"/>
    <property type="match status" value="1"/>
</dbReference>
<proteinExistence type="inferred from homology"/>
<comment type="function">
    <text evidence="1">Heme chaperone required for the biogenesis of c-type cytochromes. Transiently binds heme delivered by CcmC and transfers the heme to apo-cytochromes in a process facilitated by CcmF and CcmH.</text>
</comment>
<comment type="subcellular location">
    <subcellularLocation>
        <location evidence="1">Cell inner membrane</location>
        <topology evidence="1">Single-pass type II membrane protein</topology>
        <orientation evidence="1">Periplasmic side</orientation>
    </subcellularLocation>
</comment>
<comment type="similarity">
    <text evidence="1">Belongs to the CcmE/CycJ family.</text>
</comment>
<protein>
    <recommendedName>
        <fullName evidence="1">Cytochrome c-type biogenesis protein CcmE</fullName>
    </recommendedName>
    <alternativeName>
        <fullName evidence="1">Cytochrome c maturation protein E</fullName>
    </alternativeName>
    <alternativeName>
        <fullName evidence="1">Heme chaperone CcmE</fullName>
    </alternativeName>
</protein>
<evidence type="ECO:0000255" key="1">
    <source>
        <dbReference type="HAMAP-Rule" id="MF_01959"/>
    </source>
</evidence>
<gene>
    <name evidence="1" type="primary">ccmE</name>
    <name evidence="1" type="synonym">cycJ</name>
    <name type="ordered locus">BH04740</name>
</gene>
<accession>Q6G494</accession>
<sequence>MSSQSFHNSPSLRVILKQRKKKRLLIVLFCCLIIAIATSLITYALRNTVSFFRMPSEVTKEDILMGRPLRLGGFVEKGTVEYVGDRGVIFFVTDNVKHEKVIFSGAIPDLFREGQGVVVEGYFDKQGFFIGTRILAKHDETYMSRETADRLNKHHRVEK</sequence>
<feature type="chain" id="PRO_0000238794" description="Cytochrome c-type biogenesis protein CcmE">
    <location>
        <begin position="1"/>
        <end position="159"/>
    </location>
</feature>
<feature type="topological domain" description="Cytoplasmic" evidence="1">
    <location>
        <begin position="1"/>
        <end position="23"/>
    </location>
</feature>
<feature type="transmembrane region" description="Helical; Signal-anchor for type II membrane protein" evidence="1">
    <location>
        <begin position="24"/>
        <end position="44"/>
    </location>
</feature>
<feature type="topological domain" description="Periplasmic" evidence="1">
    <location>
        <begin position="45"/>
        <end position="159"/>
    </location>
</feature>
<feature type="binding site" description="covalent" evidence="1">
    <location>
        <position position="138"/>
    </location>
    <ligand>
        <name>heme</name>
        <dbReference type="ChEBI" id="CHEBI:30413"/>
    </ligand>
</feature>
<feature type="binding site" description="axial binding residue" evidence="1">
    <location>
        <position position="142"/>
    </location>
    <ligand>
        <name>heme</name>
        <dbReference type="ChEBI" id="CHEBI:30413"/>
    </ligand>
    <ligandPart>
        <name>Fe</name>
        <dbReference type="ChEBI" id="CHEBI:18248"/>
    </ligandPart>
</feature>
<organism>
    <name type="scientific">Bartonella henselae (strain ATCC 49882 / DSM 28221 / CCUG 30454 / Houston 1)</name>
    <name type="common">Rochalimaea henselae</name>
    <dbReference type="NCBI Taxonomy" id="283166"/>
    <lineage>
        <taxon>Bacteria</taxon>
        <taxon>Pseudomonadati</taxon>
        <taxon>Pseudomonadota</taxon>
        <taxon>Alphaproteobacteria</taxon>
        <taxon>Hyphomicrobiales</taxon>
        <taxon>Bartonellaceae</taxon>
        <taxon>Bartonella</taxon>
    </lineage>
</organism>
<reference key="1">
    <citation type="journal article" date="2004" name="Proc. Natl. Acad. Sci. U.S.A.">
        <title>The louse-borne human pathogen Bartonella quintana is a genomic derivative of the zoonotic agent Bartonella henselae.</title>
        <authorList>
            <person name="Alsmark U.C.M."/>
            <person name="Frank A.C."/>
            <person name="Karlberg E.O."/>
            <person name="Legault B.-A."/>
            <person name="Ardell D.H."/>
            <person name="Canbaeck B."/>
            <person name="Eriksson A.-S."/>
            <person name="Naeslund A.K."/>
            <person name="Handley S.A."/>
            <person name="Huvet M."/>
            <person name="La Scola B."/>
            <person name="Holmberg M."/>
            <person name="Andersson S.G.E."/>
        </authorList>
    </citation>
    <scope>NUCLEOTIDE SEQUENCE [LARGE SCALE GENOMIC DNA]</scope>
    <source>
        <strain>ATCC 49882 / DSM 28221 / CCUG 30454 / Houston 1</strain>
    </source>
</reference>
<name>CCME_BARHE</name>
<keyword id="KW-0997">Cell inner membrane</keyword>
<keyword id="KW-1003">Cell membrane</keyword>
<keyword id="KW-0201">Cytochrome c-type biogenesis</keyword>
<keyword id="KW-0349">Heme</keyword>
<keyword id="KW-0408">Iron</keyword>
<keyword id="KW-0472">Membrane</keyword>
<keyword id="KW-0479">Metal-binding</keyword>
<keyword id="KW-0735">Signal-anchor</keyword>
<keyword id="KW-0812">Transmembrane</keyword>
<keyword id="KW-1133">Transmembrane helix</keyword>